<keyword id="KW-0945">Host-virus interaction</keyword>
<keyword id="KW-1090">Inhibition of host innate immune response by virus</keyword>
<keyword id="KW-0694">RNA-binding</keyword>
<keyword id="KW-0941">Suppressor of RNA silencing</keyword>
<keyword id="KW-0899">Viral immunoevasion</keyword>
<comment type="function">
    <text evidence="1">Viral suppressor of RNA silencing which binds specifically to silencing RNAs (siRNAs). Acts as a molecular caliper to specifically select siRNAs based on the length of the duplex region of the RNA (By similarity).</text>
</comment>
<comment type="subunit">
    <text evidence="1">Homodimer.</text>
</comment>
<comment type="similarity">
    <text evidence="3">Belongs to the tombusvirus protein p19 family.</text>
</comment>
<sequence length="172" mass="19280">MERVIQGNDAREQANGERWDGGSGGTTSGFKLPDESPSWTEWRIHNDETDSNKDNPLGFKESWGFGKVVFKRYLRYDRTETSLHRVLGSWTGDSVNYAASRFLGVNQIGCTYSIRFRGVSVTISGGSRTLQHICEMAIRSKQELLQLAPVEVESNVSRGRPEGAEAFKEESE</sequence>
<protein>
    <recommendedName>
        <fullName>RNA silencing suppressor p19</fullName>
    </recommendedName>
    <alternativeName>
        <fullName>19 kDa symptom severity modulator</fullName>
    </alternativeName>
</protein>
<evidence type="ECO:0000250" key="1"/>
<evidence type="ECO:0000256" key="2">
    <source>
        <dbReference type="SAM" id="MobiDB-lite"/>
    </source>
</evidence>
<evidence type="ECO:0000305" key="3"/>
<organismHost>
    <name type="scientific">Cynara cardunculus var. scolymus</name>
    <name type="common">Globe artichoke</name>
    <name type="synonym">Cynara scolymus</name>
    <dbReference type="NCBI Taxonomy" id="59895"/>
</organismHost>
<name>P19_AMCV</name>
<proteinExistence type="inferred from homology"/>
<accession>P15960</accession>
<dbReference type="EMBL" id="X51456">
    <property type="protein sequence ID" value="CAA35823.1"/>
    <property type="molecule type" value="Genomic_RNA"/>
</dbReference>
<dbReference type="PIR" id="S08430">
    <property type="entry name" value="NKVGBC"/>
</dbReference>
<dbReference type="SMR" id="P15960"/>
<dbReference type="GO" id="GO:0044423">
    <property type="term" value="C:virion component"/>
    <property type="evidence" value="ECO:0007669"/>
    <property type="project" value="InterPro"/>
</dbReference>
<dbReference type="GO" id="GO:0003723">
    <property type="term" value="F:RNA binding"/>
    <property type="evidence" value="ECO:0007669"/>
    <property type="project" value="UniProtKB-KW"/>
</dbReference>
<dbReference type="GO" id="GO:0052170">
    <property type="term" value="P:symbiont-mediated suppression of host innate immune response"/>
    <property type="evidence" value="ECO:0007669"/>
    <property type="project" value="UniProtKB-KW"/>
</dbReference>
<dbReference type="Gene3D" id="3.30.390.180">
    <property type="entry name" value="RNA silencing suppressor P19"/>
    <property type="match status" value="1"/>
</dbReference>
<dbReference type="InterPro" id="IPR004905">
    <property type="entry name" value="Tombusvirus_p19"/>
</dbReference>
<dbReference type="InterPro" id="IPR036131">
    <property type="entry name" value="VP19_sf"/>
</dbReference>
<dbReference type="Pfam" id="PF03220">
    <property type="entry name" value="Tombus_P19"/>
    <property type="match status" value="1"/>
</dbReference>
<dbReference type="SUPFAM" id="SSF103145">
    <property type="entry name" value="Tombusvirus P19 core protein, VP19"/>
    <property type="match status" value="1"/>
</dbReference>
<gene>
    <name type="ORF">ORF4</name>
</gene>
<organism>
    <name type="scientific">Artichoke mottled crinkle virus</name>
    <name type="common">AMCV</name>
    <dbReference type="NCBI Taxonomy" id="12142"/>
    <lineage>
        <taxon>Viruses</taxon>
        <taxon>Riboviria</taxon>
        <taxon>Orthornavirae</taxon>
        <taxon>Kitrinoviricota</taxon>
        <taxon>Tolucaviricetes</taxon>
        <taxon>Tolivirales</taxon>
        <taxon>Tombusviridae</taxon>
        <taxon>Procedovirinae</taxon>
        <taxon>Tombusvirus</taxon>
        <taxon>Tombusvirus cynarae</taxon>
    </lineage>
</organism>
<feature type="chain" id="PRO_0000222871" description="RNA silencing suppressor p19">
    <location>
        <begin position="1"/>
        <end position="172"/>
    </location>
</feature>
<feature type="region of interest" description="Disordered" evidence="2">
    <location>
        <begin position="1"/>
        <end position="37"/>
    </location>
</feature>
<feature type="compositionally biased region" description="Basic and acidic residues" evidence="2">
    <location>
        <begin position="1"/>
        <end position="20"/>
    </location>
</feature>
<reference key="1">
    <citation type="journal article" date="1990" name="Nucleic Acids Res.">
        <title>Nucleotide sequence of the 3'-terminal region of artichoke mottled crinkle tombusvirus RNA.</title>
        <authorList>
            <person name="Grieco F."/>
            <person name="Gallitelli D."/>
        </authorList>
    </citation>
    <scope>NUCLEOTIDE SEQUENCE [GENOMIC RNA]</scope>
    <source>
        <strain>Bari-Dr. Gallitelli isolate</strain>
    </source>
</reference>